<reference key="1">
    <citation type="journal article" date="1992" name="Gene">
        <title>Analysis of a polyketide synthesis-encoding gene cluster of Streptomyces curacoi.</title>
        <authorList>
            <person name="Bergh S."/>
            <person name="Uhlen M."/>
        </authorList>
    </citation>
    <scope>NUCLEOTIDE SEQUENCE [GENOMIC DNA]</scope>
    <source>
        <strain>ATCC 13385 / CBS 484.68 / DSM 40107 / JCM 4219 / NBRC 12761 / NRRL B-2901 / VKM Ac-621</strain>
    </source>
</reference>
<proteinExistence type="inferred from homology"/>
<evidence type="ECO:0000255" key="1">
    <source>
        <dbReference type="PROSITE-ProRule" id="PRU01348"/>
    </source>
</evidence>
<evidence type="ECO:0000305" key="2"/>
<comment type="pathway">
    <text>Antibiotic biosynthesis; curamycin biosynthesis.</text>
</comment>
<comment type="miscellaneous">
    <text>This putative ketoacyl synthase lacks the active site cysteine.</text>
</comment>
<comment type="similarity">
    <text evidence="2">Belongs to the thiolase-like superfamily. Beta-ketoacyl-ACP synthases family.</text>
</comment>
<keyword id="KW-0012">Acyltransferase</keyword>
<keyword id="KW-0045">Antibiotic biosynthesis</keyword>
<keyword id="KW-0808">Transferase</keyword>
<name>KAS2_STRCN</name>
<sequence length="419" mass="42974">MNGSGSGIRTRRTAVTGIGVVAPNGLHADTYWKSVKEGASVLDRITREGCEHLPLRVAGEVRGFDPSALIEETFLVQTDLFTHFALAAADAALQDAGLTKAAAVADSPYSVGVVTAAGSGGGEFGQRELQKLWGQGSRFVGPYQSIAWFYAASTGQISIRSGFKGPCGVVASDEAGGLDAVAHAARVVERGTDVVVVGAAEAPLAPYSMVCQLGYPELSTDEDPAIAYRPFTSAARGFVPAEGGAVLIVEEADRAHRRGAVVRATVAGHAATFTGASHWDQSREGLAHAIHGALDEAGCAPEEIDVVFADAMGVPEADRAEALALVDALGRHAPRVPVTAPKTGIGRSYCGAALLDIAAGAGMEHGQIPPTPNVFDICHQIDLVTATARPASSAPLVLSRGLMGSNAALVLRPGPGSTA</sequence>
<accession>Q02579</accession>
<feature type="chain" id="PRO_0000180344" description="Putative polyketide beta-ketoacyl synthase 2">
    <location>
        <begin position="1"/>
        <end position="419"/>
    </location>
</feature>
<feature type="domain" description="Ketosynthase family 3 (KS3)" evidence="1">
    <location>
        <begin position="10"/>
        <end position="413"/>
    </location>
</feature>
<dbReference type="EC" id="2.3.1.-"/>
<dbReference type="EMBL" id="X62518">
    <property type="protein sequence ID" value="CAA44381.1"/>
    <property type="molecule type" value="Genomic_DNA"/>
</dbReference>
<dbReference type="EMBL" id="M33704">
    <property type="protein sequence ID" value="AAA26727.1"/>
    <property type="molecule type" value="Genomic_DNA"/>
</dbReference>
<dbReference type="PIR" id="JC1211">
    <property type="entry name" value="JC1211"/>
</dbReference>
<dbReference type="SMR" id="Q02579"/>
<dbReference type="UniPathway" id="UPA00176"/>
<dbReference type="GO" id="GO:0004315">
    <property type="term" value="F:3-oxoacyl-[acyl-carrier-protein] synthase activity"/>
    <property type="evidence" value="ECO:0007669"/>
    <property type="project" value="TreeGrafter"/>
</dbReference>
<dbReference type="GO" id="GO:0017000">
    <property type="term" value="P:antibiotic biosynthetic process"/>
    <property type="evidence" value="ECO:0007669"/>
    <property type="project" value="UniProtKB-KW"/>
</dbReference>
<dbReference type="GO" id="GO:0006633">
    <property type="term" value="P:fatty acid biosynthetic process"/>
    <property type="evidence" value="ECO:0007669"/>
    <property type="project" value="TreeGrafter"/>
</dbReference>
<dbReference type="CDD" id="cd00832">
    <property type="entry name" value="CLF"/>
    <property type="match status" value="1"/>
</dbReference>
<dbReference type="FunFam" id="3.40.47.10:FF:000089">
    <property type="entry name" value="Putative polyketide beta-ketoacyl synthase 2"/>
    <property type="match status" value="1"/>
</dbReference>
<dbReference type="Gene3D" id="3.40.47.10">
    <property type="match status" value="2"/>
</dbReference>
<dbReference type="InterPro" id="IPR000794">
    <property type="entry name" value="Beta-ketoacyl_synthase"/>
</dbReference>
<dbReference type="InterPro" id="IPR014031">
    <property type="entry name" value="Ketoacyl_synth_C"/>
</dbReference>
<dbReference type="InterPro" id="IPR014030">
    <property type="entry name" value="Ketoacyl_synth_N"/>
</dbReference>
<dbReference type="InterPro" id="IPR020841">
    <property type="entry name" value="PKS_Beta-ketoAc_synthase_dom"/>
</dbReference>
<dbReference type="InterPro" id="IPR016039">
    <property type="entry name" value="Thiolase-like"/>
</dbReference>
<dbReference type="PANTHER" id="PTHR11712:SF322">
    <property type="entry name" value="POLYKETIDE BETA-KETOACYL SYNTHASE 2-RELATED"/>
    <property type="match status" value="1"/>
</dbReference>
<dbReference type="PANTHER" id="PTHR11712">
    <property type="entry name" value="POLYKETIDE SYNTHASE-RELATED"/>
    <property type="match status" value="1"/>
</dbReference>
<dbReference type="Pfam" id="PF00109">
    <property type="entry name" value="ketoacyl-synt"/>
    <property type="match status" value="1"/>
</dbReference>
<dbReference type="Pfam" id="PF02801">
    <property type="entry name" value="Ketoacyl-synt_C"/>
    <property type="match status" value="1"/>
</dbReference>
<dbReference type="SMART" id="SM00825">
    <property type="entry name" value="PKS_KS"/>
    <property type="match status" value="1"/>
</dbReference>
<dbReference type="SUPFAM" id="SSF53901">
    <property type="entry name" value="Thiolase-like"/>
    <property type="match status" value="2"/>
</dbReference>
<dbReference type="PROSITE" id="PS52004">
    <property type="entry name" value="KS3_2"/>
    <property type="match status" value="1"/>
</dbReference>
<protein>
    <recommendedName>
        <fullName>Putative polyketide beta-ketoacyl synthase 2</fullName>
        <ecNumber>2.3.1.-</ecNumber>
    </recommendedName>
</protein>
<organism>
    <name type="scientific">Streptomyces cyaneus</name>
    <name type="common">Streptomyces curacoi</name>
    <dbReference type="NCBI Taxonomy" id="1904"/>
    <lineage>
        <taxon>Bacteria</taxon>
        <taxon>Bacillati</taxon>
        <taxon>Actinomycetota</taxon>
        <taxon>Actinomycetes</taxon>
        <taxon>Kitasatosporales</taxon>
        <taxon>Streptomycetaceae</taxon>
        <taxon>Streptomyces</taxon>
    </lineage>
</organism>
<gene>
    <name type="primary">curB</name>
</gene>